<accession>Q8TSV8</accession>
<dbReference type="EC" id="1.8.98.1" evidence="1"/>
<dbReference type="EMBL" id="AE010299">
    <property type="protein sequence ID" value="AAM04127.1"/>
    <property type="molecule type" value="Genomic_DNA"/>
</dbReference>
<dbReference type="STRING" id="188937.MA_0687"/>
<dbReference type="EnsemblBacteria" id="AAM04127">
    <property type="protein sequence ID" value="AAM04127"/>
    <property type="gene ID" value="MA_0687"/>
</dbReference>
<dbReference type="KEGG" id="mac:MA_0687"/>
<dbReference type="HOGENOM" id="CLU_1072042_0_0_2"/>
<dbReference type="InParanoid" id="Q8TSV8"/>
<dbReference type="PhylomeDB" id="Q8TSV8"/>
<dbReference type="UniPathway" id="UPA00647">
    <property type="reaction ID" value="UER00700"/>
</dbReference>
<dbReference type="Proteomes" id="UP000002487">
    <property type="component" value="Chromosome"/>
</dbReference>
<dbReference type="GO" id="GO:0005886">
    <property type="term" value="C:plasma membrane"/>
    <property type="evidence" value="ECO:0007669"/>
    <property type="project" value="UniProtKB-SubCell"/>
</dbReference>
<dbReference type="GO" id="GO:0051912">
    <property type="term" value="F:CoB--CoM heterodisulfide reductase activity"/>
    <property type="evidence" value="ECO:0007669"/>
    <property type="project" value="UniProtKB-EC"/>
</dbReference>
<dbReference type="GO" id="GO:0046872">
    <property type="term" value="F:metal ion binding"/>
    <property type="evidence" value="ECO:0007669"/>
    <property type="project" value="UniProtKB-KW"/>
</dbReference>
<dbReference type="GO" id="GO:0015948">
    <property type="term" value="P:methanogenesis"/>
    <property type="evidence" value="ECO:0007669"/>
    <property type="project" value="UniProtKB-KW"/>
</dbReference>
<dbReference type="Gene3D" id="1.20.950.20">
    <property type="entry name" value="Transmembrane di-heme cytochromes, Chain C"/>
    <property type="match status" value="1"/>
</dbReference>
<dbReference type="InterPro" id="IPR036197">
    <property type="entry name" value="NarG-like_sf"/>
</dbReference>
<dbReference type="SUPFAM" id="SSF103501">
    <property type="entry name" value="Respiratory nitrate reductase 1 gamma chain"/>
    <property type="match status" value="1"/>
</dbReference>
<proteinExistence type="inferred from homology"/>
<reference key="1">
    <citation type="journal article" date="2002" name="Genome Res.">
        <title>The genome of Methanosarcina acetivorans reveals extensive metabolic and physiological diversity.</title>
        <authorList>
            <person name="Galagan J.E."/>
            <person name="Nusbaum C."/>
            <person name="Roy A."/>
            <person name="Endrizzi M.G."/>
            <person name="Macdonald P."/>
            <person name="FitzHugh W."/>
            <person name="Calvo S."/>
            <person name="Engels R."/>
            <person name="Smirnov S."/>
            <person name="Atnoor D."/>
            <person name="Brown A."/>
            <person name="Allen N."/>
            <person name="Naylor J."/>
            <person name="Stange-Thomann N."/>
            <person name="DeArellano K."/>
            <person name="Johnson R."/>
            <person name="Linton L."/>
            <person name="McEwan P."/>
            <person name="McKernan K."/>
            <person name="Talamas J."/>
            <person name="Tirrell A."/>
            <person name="Ye W."/>
            <person name="Zimmer A."/>
            <person name="Barber R.D."/>
            <person name="Cann I."/>
            <person name="Graham D.E."/>
            <person name="Grahame D.A."/>
            <person name="Guss A.M."/>
            <person name="Hedderich R."/>
            <person name="Ingram-Smith C."/>
            <person name="Kuettner H.C."/>
            <person name="Krzycki J.A."/>
            <person name="Leigh J.A."/>
            <person name="Li W."/>
            <person name="Liu J."/>
            <person name="Mukhopadhyay B."/>
            <person name="Reeve J.N."/>
            <person name="Smith K."/>
            <person name="Springer T.A."/>
            <person name="Umayam L.A."/>
            <person name="White O."/>
            <person name="White R.H."/>
            <person name="de Macario E.C."/>
            <person name="Ferry J.G."/>
            <person name="Jarrell K.F."/>
            <person name="Jing H."/>
            <person name="Macario A.J.L."/>
            <person name="Paulsen I.T."/>
            <person name="Pritchett M."/>
            <person name="Sowers K.R."/>
            <person name="Swanson R.V."/>
            <person name="Zinder S.H."/>
            <person name="Lander E."/>
            <person name="Metcalf W.W."/>
            <person name="Birren B."/>
        </authorList>
    </citation>
    <scope>NUCLEOTIDE SEQUENCE [LARGE SCALE GENOMIC DNA]</scope>
    <source>
        <strain>ATCC 35395 / DSM 2834 / JCM 12185 / C2A</strain>
    </source>
</reference>
<comment type="function">
    <text evidence="1">Part of a complex that catalyzes the reversible reduction of CoM-S-S-CoB to the thiol-coenzymes H-S-CoM (coenzyme M) and H-S-CoB (coenzyme B). HdrE may be responsible for anchoring the complex to the membrane.</text>
</comment>
<comment type="catalytic activity">
    <reaction evidence="1">
        <text>methanophenazine + coenzyme B + coenzyme M = dihydromethanophenazine + coenzyme M-coenzyme B heterodisulfide</text>
        <dbReference type="Rhea" id="RHEA:18085"/>
        <dbReference type="ChEBI" id="CHEBI:29118"/>
        <dbReference type="ChEBI" id="CHEBI:50375"/>
        <dbReference type="ChEBI" id="CHEBI:58319"/>
        <dbReference type="ChEBI" id="CHEBI:58411"/>
        <dbReference type="ChEBI" id="CHEBI:58596"/>
        <dbReference type="EC" id="1.8.98.1"/>
    </reaction>
</comment>
<comment type="cofactor">
    <cofactor evidence="1">
        <name>heme b</name>
        <dbReference type="ChEBI" id="CHEBI:60344"/>
    </cofactor>
    <text evidence="1">Binds 2 heme b (iron(II)-protoporphyrin IX) groups per subunit.</text>
</comment>
<comment type="pathway">
    <text evidence="1">Cofactor metabolism; coenzyme M-coenzyme B heterodisulfide reduction; coenzyme B and coenzyme M from coenzyme M-coenzyme B heterodisulfide: step 1/1.</text>
</comment>
<comment type="subunit">
    <text evidence="2">The dihydromethanophenazine:CoB--CoM heterodisulfide reductase is composed of two subunits; HdrD and HdrE.</text>
</comment>
<comment type="subcellular location">
    <subcellularLocation>
        <location evidence="4">Cell membrane</location>
        <topology evidence="3">Multi-pass membrane protein</topology>
    </subcellularLocation>
</comment>
<comment type="similarity">
    <text evidence="4">Belongs to the HdrE family.</text>
</comment>
<feature type="chain" id="PRO_0000150082" description="Dihydromethanophenazine:CoB--CoM heterodisulfide reductase subunit E">
    <location>
        <begin position="1"/>
        <end position="264"/>
    </location>
</feature>
<feature type="transmembrane region" description="Helical" evidence="3">
    <location>
        <begin position="19"/>
        <end position="39"/>
    </location>
</feature>
<feature type="transmembrane region" description="Helical" evidence="3">
    <location>
        <begin position="109"/>
        <end position="129"/>
    </location>
</feature>
<feature type="transmembrane region" description="Helical" evidence="3">
    <location>
        <begin position="151"/>
        <end position="171"/>
    </location>
</feature>
<feature type="transmembrane region" description="Helical" evidence="3">
    <location>
        <begin position="185"/>
        <end position="205"/>
    </location>
</feature>
<feature type="transmembrane region" description="Helical" evidence="3">
    <location>
        <begin position="223"/>
        <end position="243"/>
    </location>
</feature>
<name>HDRE_METAC</name>
<protein>
    <recommendedName>
        <fullName evidence="4">Dihydromethanophenazine:CoB--CoM heterodisulfide reductase subunit E</fullName>
        <ecNumber evidence="1">1.8.98.1</ecNumber>
    </recommendedName>
    <alternativeName>
        <fullName evidence="4">CoB--CoM heterodisulfide reductase subunit E</fullName>
    </alternativeName>
    <alternativeName>
        <fullName evidence="4">Coenzyme B:coenzyme M:methanophenazine oxidoreductase subunit E</fullName>
    </alternativeName>
</protein>
<gene>
    <name type="primary">hdrE</name>
    <name type="ordered locus">MA_0687</name>
</gene>
<organism>
    <name type="scientific">Methanosarcina acetivorans (strain ATCC 35395 / DSM 2834 / JCM 12185 / C2A)</name>
    <dbReference type="NCBI Taxonomy" id="188937"/>
    <lineage>
        <taxon>Archaea</taxon>
        <taxon>Methanobacteriati</taxon>
        <taxon>Methanobacteriota</taxon>
        <taxon>Stenosarchaea group</taxon>
        <taxon>Methanomicrobia</taxon>
        <taxon>Methanosarcinales</taxon>
        <taxon>Methanosarcinaceae</taxon>
        <taxon>Methanosarcina</taxon>
    </lineage>
</organism>
<evidence type="ECO:0000250" key="1">
    <source>
        <dbReference type="UniProtKB" id="A0A0E3NFS5"/>
    </source>
</evidence>
<evidence type="ECO:0000250" key="2">
    <source>
        <dbReference type="UniProtKB" id="P96796"/>
    </source>
</evidence>
<evidence type="ECO:0000255" key="3"/>
<evidence type="ECO:0000305" key="4"/>
<keyword id="KW-1003">Cell membrane</keyword>
<keyword id="KW-0349">Heme</keyword>
<keyword id="KW-0408">Iron</keyword>
<keyword id="KW-0472">Membrane</keyword>
<keyword id="KW-0479">Metal-binding</keyword>
<keyword id="KW-0484">Methanogenesis</keyword>
<keyword id="KW-0560">Oxidoreductase</keyword>
<keyword id="KW-1185">Reference proteome</keyword>
<keyword id="KW-0812">Transmembrane</keyword>
<keyword id="KW-1133">Transmembrane helix</keyword>
<sequence length="264" mass="29527">MSSEMAYFSGLTDALRLTFVQIMILSTIAIVVFLYGMILNFQKWGAGVTGYALEPQAGSKGSAIRFLKTWWGQVVEESHHGHGKPILEVLILDILFQRRILKRSPLRWFMHFTIFAGWMTLFALSGLMFAVEMTEKFGIELPFTPAEFREFLSIPNYIFGYILLIGVLIALVRRIVVSDVREASIMYDWILIGGVFLVTISGFVADGIRTGIIWGFGLDPTTAPPAALFHSVISLFFCIAYIPYSKYIHVIATPLAILANKGGE</sequence>